<feature type="chain" id="PRO_0000206915" description="Exodeoxyribonuclease 7 small subunit">
    <location>
        <begin position="1"/>
        <end position="76"/>
    </location>
</feature>
<sequence>MENKLSFEEAISQLEHLVSKLEQGDVPLEEAISYFKEGMELSKLCDEKLKNVQEQMAVILGEDGELEPFTALGDEA</sequence>
<proteinExistence type="inferred from homology"/>
<reference key="1">
    <citation type="journal article" date="2003" name="Nature">
        <title>Genome sequence of Bacillus cereus and comparative analysis with Bacillus anthracis.</title>
        <authorList>
            <person name="Ivanova N."/>
            <person name="Sorokin A."/>
            <person name="Anderson I."/>
            <person name="Galleron N."/>
            <person name="Candelon B."/>
            <person name="Kapatral V."/>
            <person name="Bhattacharyya A."/>
            <person name="Reznik G."/>
            <person name="Mikhailova N."/>
            <person name="Lapidus A."/>
            <person name="Chu L."/>
            <person name="Mazur M."/>
            <person name="Goltsman E."/>
            <person name="Larsen N."/>
            <person name="D'Souza M."/>
            <person name="Walunas T."/>
            <person name="Grechkin Y."/>
            <person name="Pusch G."/>
            <person name="Haselkorn R."/>
            <person name="Fonstein M."/>
            <person name="Ehrlich S.D."/>
            <person name="Overbeek R."/>
            <person name="Kyrpides N.C."/>
        </authorList>
    </citation>
    <scope>NUCLEOTIDE SEQUENCE [LARGE SCALE GENOMIC DNA]</scope>
    <source>
        <strain>ATCC 14579 / DSM 31 / CCUG 7414 / JCM 2152 / NBRC 15305 / NCIMB 9373 / NCTC 2599 / NRRL B-3711</strain>
    </source>
</reference>
<protein>
    <recommendedName>
        <fullName evidence="1">Exodeoxyribonuclease 7 small subunit</fullName>
        <ecNumber evidence="1">3.1.11.6</ecNumber>
    </recommendedName>
    <alternativeName>
        <fullName evidence="1">Exodeoxyribonuclease VII small subunit</fullName>
        <shortName evidence="1">Exonuclease VII small subunit</shortName>
    </alternativeName>
</protein>
<dbReference type="EC" id="3.1.11.6" evidence="1"/>
<dbReference type="EMBL" id="AE016877">
    <property type="protein sequence ID" value="AAP11093.1"/>
    <property type="molecule type" value="Genomic_DNA"/>
</dbReference>
<dbReference type="RefSeq" id="NP_833892.1">
    <property type="nucleotide sequence ID" value="NC_004722.1"/>
</dbReference>
<dbReference type="RefSeq" id="WP_000428423.1">
    <property type="nucleotide sequence ID" value="NZ_CP138336.1"/>
</dbReference>
<dbReference type="SMR" id="Q818R7"/>
<dbReference type="STRING" id="226900.BC_4178"/>
<dbReference type="GeneID" id="93006923"/>
<dbReference type="KEGG" id="bce:BC4178"/>
<dbReference type="PATRIC" id="fig|226900.8.peg.4318"/>
<dbReference type="HOGENOM" id="CLU_145918_3_1_9"/>
<dbReference type="OrthoDB" id="9798666at2"/>
<dbReference type="Proteomes" id="UP000001417">
    <property type="component" value="Chromosome"/>
</dbReference>
<dbReference type="GO" id="GO:0005829">
    <property type="term" value="C:cytosol"/>
    <property type="evidence" value="ECO:0000318"/>
    <property type="project" value="GO_Central"/>
</dbReference>
<dbReference type="GO" id="GO:0009318">
    <property type="term" value="C:exodeoxyribonuclease VII complex"/>
    <property type="evidence" value="ECO:0007669"/>
    <property type="project" value="InterPro"/>
</dbReference>
<dbReference type="GO" id="GO:0008855">
    <property type="term" value="F:exodeoxyribonuclease VII activity"/>
    <property type="evidence" value="ECO:0000318"/>
    <property type="project" value="GO_Central"/>
</dbReference>
<dbReference type="GO" id="GO:0006308">
    <property type="term" value="P:DNA catabolic process"/>
    <property type="evidence" value="ECO:0007669"/>
    <property type="project" value="UniProtKB-UniRule"/>
</dbReference>
<dbReference type="FunFam" id="1.10.287.1040:FF:000002">
    <property type="entry name" value="Exodeoxyribonuclease 7 small subunit"/>
    <property type="match status" value="1"/>
</dbReference>
<dbReference type="Gene3D" id="1.10.287.1040">
    <property type="entry name" value="Exonuclease VII, small subunit"/>
    <property type="match status" value="1"/>
</dbReference>
<dbReference type="HAMAP" id="MF_00337">
    <property type="entry name" value="Exonuc_7_S"/>
    <property type="match status" value="1"/>
</dbReference>
<dbReference type="InterPro" id="IPR003761">
    <property type="entry name" value="Exonuc_VII_S"/>
</dbReference>
<dbReference type="InterPro" id="IPR037004">
    <property type="entry name" value="Exonuc_VII_ssu_sf"/>
</dbReference>
<dbReference type="NCBIfam" id="NF010666">
    <property type="entry name" value="PRK14063.1"/>
    <property type="match status" value="1"/>
</dbReference>
<dbReference type="NCBIfam" id="TIGR01280">
    <property type="entry name" value="xseB"/>
    <property type="match status" value="1"/>
</dbReference>
<dbReference type="PANTHER" id="PTHR34137">
    <property type="entry name" value="EXODEOXYRIBONUCLEASE 7 SMALL SUBUNIT"/>
    <property type="match status" value="1"/>
</dbReference>
<dbReference type="PANTHER" id="PTHR34137:SF1">
    <property type="entry name" value="EXODEOXYRIBONUCLEASE 7 SMALL SUBUNIT"/>
    <property type="match status" value="1"/>
</dbReference>
<dbReference type="Pfam" id="PF02609">
    <property type="entry name" value="Exonuc_VII_S"/>
    <property type="match status" value="1"/>
</dbReference>
<dbReference type="PIRSF" id="PIRSF006488">
    <property type="entry name" value="Exonuc_VII_S"/>
    <property type="match status" value="1"/>
</dbReference>
<dbReference type="SUPFAM" id="SSF116842">
    <property type="entry name" value="XseB-like"/>
    <property type="match status" value="1"/>
</dbReference>
<name>EX7S_BACCR</name>
<evidence type="ECO:0000255" key="1">
    <source>
        <dbReference type="HAMAP-Rule" id="MF_00337"/>
    </source>
</evidence>
<gene>
    <name evidence="1" type="primary">xseB</name>
    <name type="ordered locus">BC_4178</name>
</gene>
<organism>
    <name type="scientific">Bacillus cereus (strain ATCC 14579 / DSM 31 / CCUG 7414 / JCM 2152 / NBRC 15305 / NCIMB 9373 / NCTC 2599 / NRRL B-3711)</name>
    <dbReference type="NCBI Taxonomy" id="226900"/>
    <lineage>
        <taxon>Bacteria</taxon>
        <taxon>Bacillati</taxon>
        <taxon>Bacillota</taxon>
        <taxon>Bacilli</taxon>
        <taxon>Bacillales</taxon>
        <taxon>Bacillaceae</taxon>
        <taxon>Bacillus</taxon>
        <taxon>Bacillus cereus group</taxon>
    </lineage>
</organism>
<comment type="function">
    <text evidence="1">Bidirectionally degrades single-stranded DNA into large acid-insoluble oligonucleotides, which are then degraded further into small acid-soluble oligonucleotides.</text>
</comment>
<comment type="catalytic activity">
    <reaction evidence="1">
        <text>Exonucleolytic cleavage in either 5'- to 3'- or 3'- to 5'-direction to yield nucleoside 5'-phosphates.</text>
        <dbReference type="EC" id="3.1.11.6"/>
    </reaction>
</comment>
<comment type="subunit">
    <text evidence="1">Heterooligomer composed of large and small subunits.</text>
</comment>
<comment type="subcellular location">
    <subcellularLocation>
        <location evidence="1">Cytoplasm</location>
    </subcellularLocation>
</comment>
<comment type="similarity">
    <text evidence="1">Belongs to the XseB family.</text>
</comment>
<accession>Q818R7</accession>
<keyword id="KW-0963">Cytoplasm</keyword>
<keyword id="KW-0269">Exonuclease</keyword>
<keyword id="KW-0378">Hydrolase</keyword>
<keyword id="KW-0540">Nuclease</keyword>
<keyword id="KW-1185">Reference proteome</keyword>